<name>GIA5_GIAIN</name>
<accession>Q4VPQ4</accession>
<proteinExistence type="inferred from homology"/>
<evidence type="ECO:0000250" key="1"/>
<evidence type="ECO:0000255" key="2">
    <source>
        <dbReference type="PROSITE-ProRule" id="PRU01245"/>
    </source>
</evidence>
<protein>
    <recommendedName>
        <fullName>Giardin subunit alpha-5</fullName>
    </recommendedName>
</protein>
<organism>
    <name type="scientific">Giardia intestinalis</name>
    <name type="common">Giardia lamblia</name>
    <dbReference type="NCBI Taxonomy" id="5741"/>
    <lineage>
        <taxon>Eukaryota</taxon>
        <taxon>Metamonada</taxon>
        <taxon>Diplomonadida</taxon>
        <taxon>Hexamitidae</taxon>
        <taxon>Giardiinae</taxon>
        <taxon>Giardia</taxon>
    </lineage>
</organism>
<keyword id="KW-0041">Annexin</keyword>
<keyword id="KW-0963">Cytoplasm</keyword>
<keyword id="KW-0206">Cytoskeleton</keyword>
<keyword id="KW-0493">Microtubule</keyword>
<keyword id="KW-0677">Repeat</keyword>
<comment type="function">
    <text evidence="1">Giardins are involved in parasite attachment to the intestinal mucosa and in the cytoskeletal disassembly and reassembly that marks the transition from infectious trophozoite to transmissible cyst. They may interact with other cytoskeletal proteins such as microtubules in the microribbons or crossbridges, to maintain the integrity of the ventral disk (By similarity).</text>
</comment>
<comment type="subcellular location">
    <subcellularLocation>
        <location evidence="1">Cytoplasm</location>
        <location evidence="1">Cytoskeleton</location>
    </subcellularLocation>
</comment>
<comment type="similarity">
    <text evidence="2">Belongs to the annexin family. Giardin subunit alpha subfamily.</text>
</comment>
<sequence length="302" mass="33921">MTSTVAQICSDLKGAIDKKDELRIAFIASEYSSPSRLKIAQSYEATYKTPITEAIKKSLKGGTAEDLLVNMWVSRHEHRAELINKALGGSSDEEAIRELVFLCNPEDWHETASVYNQKYQKIMQDAVTKAIGSKSHWAKLVAGWMEHKREDRGSVENDVKYLKELIDAPVTDGNALAQFFASTTPDEYTQIADKFCEEYNLSIDQALVRPLKENEDDLEAYAAAHFALHGLPVLAAQLINKACRPKNGNERSICRITTLMVDQCLAAKYAYKLYGDMGADLSRCFDERMAPILRTLWRVTDA</sequence>
<feature type="chain" id="PRO_0000288028" description="Giardin subunit alpha-5">
    <location>
        <begin position="1"/>
        <end position="302"/>
    </location>
</feature>
<feature type="repeat" description="Annexin 1" evidence="2">
    <location>
        <begin position="1"/>
        <end position="72"/>
    </location>
</feature>
<feature type="repeat" description="Annexin 2" evidence="2">
    <location>
        <begin position="74"/>
        <end position="144"/>
    </location>
</feature>
<feature type="repeat" description="Annexin 3" evidence="2">
    <location>
        <begin position="153"/>
        <end position="226"/>
    </location>
</feature>
<feature type="repeat" description="Annexin 4" evidence="2">
    <location>
        <begin position="230"/>
        <end position="298"/>
    </location>
</feature>
<dbReference type="EMBL" id="AY781318">
    <property type="protein sequence ID" value="AAX07969.1"/>
    <property type="molecule type" value="Genomic_DNA"/>
</dbReference>
<dbReference type="RefSeq" id="XP_001706959.1">
    <property type="nucleotide sequence ID" value="XM_001706907.1"/>
</dbReference>
<dbReference type="SMR" id="Q4VPQ4"/>
<dbReference type="GeneID" id="5699854"/>
<dbReference type="KEGG" id="gla:GL50803_007797"/>
<dbReference type="VEuPathDB" id="GiardiaDB:DHA2_7797"/>
<dbReference type="VEuPathDB" id="GiardiaDB:GL50581_1671"/>
<dbReference type="VEuPathDB" id="GiardiaDB:GL50803_007797"/>
<dbReference type="VEuPathDB" id="GiardiaDB:QR46_1874"/>
<dbReference type="OrthoDB" id="10248678at2759"/>
<dbReference type="GO" id="GO:0005737">
    <property type="term" value="C:cytoplasm"/>
    <property type="evidence" value="ECO:0007669"/>
    <property type="project" value="UniProtKB-KW"/>
</dbReference>
<dbReference type="GO" id="GO:0005874">
    <property type="term" value="C:microtubule"/>
    <property type="evidence" value="ECO:0007669"/>
    <property type="project" value="UniProtKB-KW"/>
</dbReference>
<dbReference type="GO" id="GO:0005886">
    <property type="term" value="C:plasma membrane"/>
    <property type="evidence" value="ECO:0007669"/>
    <property type="project" value="TreeGrafter"/>
</dbReference>
<dbReference type="GO" id="GO:0005509">
    <property type="term" value="F:calcium ion binding"/>
    <property type="evidence" value="ECO:0007669"/>
    <property type="project" value="InterPro"/>
</dbReference>
<dbReference type="GO" id="GO:0005544">
    <property type="term" value="F:calcium-dependent phospholipid binding"/>
    <property type="evidence" value="ECO:0007669"/>
    <property type="project" value="InterPro"/>
</dbReference>
<dbReference type="GO" id="GO:0001786">
    <property type="term" value="F:phosphatidylserine binding"/>
    <property type="evidence" value="ECO:0007669"/>
    <property type="project" value="TreeGrafter"/>
</dbReference>
<dbReference type="GO" id="GO:0007010">
    <property type="term" value="P:cytoskeleton organization"/>
    <property type="evidence" value="ECO:0007669"/>
    <property type="project" value="InterPro"/>
</dbReference>
<dbReference type="Gene3D" id="1.10.220.10">
    <property type="entry name" value="Annexin"/>
    <property type="match status" value="4"/>
</dbReference>
<dbReference type="InterPro" id="IPR008088">
    <property type="entry name" value="Alpha_giardin"/>
</dbReference>
<dbReference type="InterPro" id="IPR018502">
    <property type="entry name" value="Annexin_repeat"/>
</dbReference>
<dbReference type="InterPro" id="IPR037104">
    <property type="entry name" value="Annexin_sf"/>
</dbReference>
<dbReference type="PANTHER" id="PTHR10502">
    <property type="entry name" value="ANNEXIN"/>
    <property type="match status" value="1"/>
</dbReference>
<dbReference type="PANTHER" id="PTHR10502:SF102">
    <property type="entry name" value="ANNEXIN B11"/>
    <property type="match status" value="1"/>
</dbReference>
<dbReference type="Pfam" id="PF00191">
    <property type="entry name" value="Annexin"/>
    <property type="match status" value="1"/>
</dbReference>
<dbReference type="Pfam" id="PF22293">
    <property type="entry name" value="ANXE1_4th"/>
    <property type="match status" value="1"/>
</dbReference>
<dbReference type="PRINTS" id="PR01712">
    <property type="entry name" value="ALPHAGIARDIN"/>
</dbReference>
<dbReference type="SUPFAM" id="SSF47874">
    <property type="entry name" value="Annexin"/>
    <property type="match status" value="1"/>
</dbReference>
<dbReference type="PROSITE" id="PS51897">
    <property type="entry name" value="ANNEXIN_2"/>
    <property type="match status" value="4"/>
</dbReference>
<reference key="1">
    <citation type="journal article" date="2005" name="Int. J. Parasitol.">
        <title>Annexin-like alpha giardins: a new cytoskeletal gene family in Giardia lamblia.</title>
        <authorList>
            <person name="Weiland M.E.-L."/>
            <person name="McArthur A.G."/>
            <person name="Morrison H.G."/>
            <person name="Sogin M.L."/>
            <person name="Svard S.G."/>
        </authorList>
    </citation>
    <scope>NUCLEOTIDE SEQUENCE [GENOMIC DNA]</scope>
    <source>
        <strain>ATCC 50803 / WB-C6</strain>
    </source>
</reference>